<evidence type="ECO:0000255" key="1"/>
<evidence type="ECO:0000305" key="2"/>
<sequence length="350" mass="39215">MKLEQITEELKSQQADAAWITTPLNIFYFTGYLSDPHERLLALLIKSNGEQVLFCPQLEVEEVRASPFNGEVIGYLDTENALDKYDIKFNKLLVESAHLTLQRQRELIDAFGVQSFGDIDQTIKTLRNIKSDSEIEKIKKACELADKCIEIGVSFLKEGVTERQVVNHIEYEIKAYGVNEMSFDTMVLFGDHAASPHGTPGDRQLKKDEFVLFDLGVIYENYCSDMTRTVKFGTPDAKAQEIYDVVLKAEKEAIAAIKPGVTIKDVDDIARNIITEAGYGEYFPHRLGHGLGLEEHEYQDVSSTNTNEFKAGMVITVEPGIYVPGVAGVRIEDDILVTENGNESLTGYEK</sequence>
<reference key="1">
    <citation type="journal article" date="2005" name="Proc. Natl. Acad. Sci. U.S.A.">
        <title>Whole genome sequence of Staphylococcus saprophyticus reveals the pathogenesis of uncomplicated urinary tract infection.</title>
        <authorList>
            <person name="Kuroda M."/>
            <person name="Yamashita A."/>
            <person name="Hirakawa H."/>
            <person name="Kumano M."/>
            <person name="Morikawa K."/>
            <person name="Higashide M."/>
            <person name="Maruyama A."/>
            <person name="Inose Y."/>
            <person name="Matoba K."/>
            <person name="Toh H."/>
            <person name="Kuhara S."/>
            <person name="Hattori M."/>
            <person name="Ohta T."/>
        </authorList>
    </citation>
    <scope>NUCLEOTIDE SEQUENCE [LARGE SCALE GENOMIC DNA]</scope>
    <source>
        <strain>ATCC 15305 / DSM 20229 / NCIMB 8711 / NCTC 7292 / S-41</strain>
    </source>
</reference>
<protein>
    <recommendedName>
        <fullName>Uncharacterized peptidase SSP1059</fullName>
        <ecNumber>3.4.-.-</ecNumber>
    </recommendedName>
</protein>
<dbReference type="EC" id="3.4.-.-"/>
<dbReference type="EMBL" id="AP008934">
    <property type="protein sequence ID" value="BAE18204.1"/>
    <property type="molecule type" value="Genomic_DNA"/>
</dbReference>
<dbReference type="RefSeq" id="WP_011302902.1">
    <property type="nucleotide sequence ID" value="NZ_MTGA01000038.1"/>
</dbReference>
<dbReference type="SMR" id="Q49YD7"/>
<dbReference type="GeneID" id="3615427"/>
<dbReference type="KEGG" id="ssp:SSP1059"/>
<dbReference type="PATRIC" id="fig|342451.11.peg.1058"/>
<dbReference type="eggNOG" id="COG0006">
    <property type="taxonomic scope" value="Bacteria"/>
</dbReference>
<dbReference type="HOGENOM" id="CLU_017266_4_2_9"/>
<dbReference type="OrthoDB" id="9806388at2"/>
<dbReference type="Proteomes" id="UP000006371">
    <property type="component" value="Chromosome"/>
</dbReference>
<dbReference type="GO" id="GO:0016787">
    <property type="term" value="F:hydrolase activity"/>
    <property type="evidence" value="ECO:0007669"/>
    <property type="project" value="UniProtKB-KW"/>
</dbReference>
<dbReference type="GO" id="GO:0046872">
    <property type="term" value="F:metal ion binding"/>
    <property type="evidence" value="ECO:0007669"/>
    <property type="project" value="UniProtKB-KW"/>
</dbReference>
<dbReference type="CDD" id="cd01092">
    <property type="entry name" value="APP-like"/>
    <property type="match status" value="1"/>
</dbReference>
<dbReference type="FunFam" id="3.90.230.10:FF:000014">
    <property type="entry name" value="Aminopeptidase P family protein"/>
    <property type="match status" value="1"/>
</dbReference>
<dbReference type="Gene3D" id="3.90.230.10">
    <property type="entry name" value="Creatinase/methionine aminopeptidase superfamily"/>
    <property type="match status" value="1"/>
</dbReference>
<dbReference type="Gene3D" id="3.40.350.10">
    <property type="entry name" value="Creatinase/prolidase N-terminal domain"/>
    <property type="match status" value="1"/>
</dbReference>
<dbReference type="InterPro" id="IPR029149">
    <property type="entry name" value="Creatin/AminoP/Spt16_N"/>
</dbReference>
<dbReference type="InterPro" id="IPR036005">
    <property type="entry name" value="Creatinase/aminopeptidase-like"/>
</dbReference>
<dbReference type="InterPro" id="IPR000587">
    <property type="entry name" value="Creatinase_N"/>
</dbReference>
<dbReference type="InterPro" id="IPR000994">
    <property type="entry name" value="Pept_M24"/>
</dbReference>
<dbReference type="InterPro" id="IPR050659">
    <property type="entry name" value="Peptidase_M24B"/>
</dbReference>
<dbReference type="InterPro" id="IPR001131">
    <property type="entry name" value="Peptidase_M24B_aminopep-P_CS"/>
</dbReference>
<dbReference type="PANTHER" id="PTHR46112">
    <property type="entry name" value="AMINOPEPTIDASE"/>
    <property type="match status" value="1"/>
</dbReference>
<dbReference type="PANTHER" id="PTHR46112:SF10">
    <property type="entry name" value="DIPEPTIDASE YKVY-RELATED"/>
    <property type="match status" value="1"/>
</dbReference>
<dbReference type="Pfam" id="PF01321">
    <property type="entry name" value="Creatinase_N"/>
    <property type="match status" value="1"/>
</dbReference>
<dbReference type="Pfam" id="PF00557">
    <property type="entry name" value="Peptidase_M24"/>
    <property type="match status" value="1"/>
</dbReference>
<dbReference type="SUPFAM" id="SSF55920">
    <property type="entry name" value="Creatinase/aminopeptidase"/>
    <property type="match status" value="1"/>
</dbReference>
<dbReference type="SUPFAM" id="SSF53092">
    <property type="entry name" value="Creatinase/prolidase N-terminal domain"/>
    <property type="match status" value="1"/>
</dbReference>
<dbReference type="PROSITE" id="PS00491">
    <property type="entry name" value="PROLINE_PEPTIDASE"/>
    <property type="match status" value="1"/>
</dbReference>
<name>Y1059_STAS1</name>
<proteinExistence type="inferred from homology"/>
<gene>
    <name type="ordered locus">SSP1059</name>
</gene>
<organism>
    <name type="scientific">Staphylococcus saprophyticus subsp. saprophyticus (strain ATCC 15305 / DSM 20229 / NCIMB 8711 / NCTC 7292 / S-41)</name>
    <dbReference type="NCBI Taxonomy" id="342451"/>
    <lineage>
        <taxon>Bacteria</taxon>
        <taxon>Bacillati</taxon>
        <taxon>Bacillota</taxon>
        <taxon>Bacilli</taxon>
        <taxon>Bacillales</taxon>
        <taxon>Staphylococcaceae</taxon>
        <taxon>Staphylococcus</taxon>
    </lineage>
</organism>
<keyword id="KW-0378">Hydrolase</keyword>
<keyword id="KW-0464">Manganese</keyword>
<keyword id="KW-0479">Metal-binding</keyword>
<keyword id="KW-1185">Reference proteome</keyword>
<accession>Q49YD7</accession>
<feature type="chain" id="PRO_0000299431" description="Uncharacterized peptidase SSP1059">
    <location>
        <begin position="1"/>
        <end position="350"/>
    </location>
</feature>
<feature type="binding site" evidence="1">
    <location>
        <position position="214"/>
    </location>
    <ligand>
        <name>Mn(2+)</name>
        <dbReference type="ChEBI" id="CHEBI:29035"/>
        <label>2</label>
    </ligand>
</feature>
<feature type="binding site" evidence="1">
    <location>
        <position position="225"/>
    </location>
    <ligand>
        <name>Mn(2+)</name>
        <dbReference type="ChEBI" id="CHEBI:29035"/>
        <label>1</label>
    </ligand>
</feature>
<feature type="binding site" evidence="1">
    <location>
        <position position="225"/>
    </location>
    <ligand>
        <name>Mn(2+)</name>
        <dbReference type="ChEBI" id="CHEBI:29035"/>
        <label>2</label>
    </ligand>
</feature>
<feature type="binding site" evidence="1">
    <location>
        <position position="289"/>
    </location>
    <ligand>
        <name>Mn(2+)</name>
        <dbReference type="ChEBI" id="CHEBI:29035"/>
        <label>1</label>
    </ligand>
</feature>
<feature type="binding site" evidence="1">
    <location>
        <position position="318"/>
    </location>
    <ligand>
        <name>Mn(2+)</name>
        <dbReference type="ChEBI" id="CHEBI:29035"/>
        <label>1</label>
    </ligand>
</feature>
<feature type="binding site" evidence="1">
    <location>
        <position position="332"/>
    </location>
    <ligand>
        <name>Mn(2+)</name>
        <dbReference type="ChEBI" id="CHEBI:29035"/>
        <label>1</label>
    </ligand>
</feature>
<feature type="binding site" evidence="1">
    <location>
        <position position="332"/>
    </location>
    <ligand>
        <name>Mn(2+)</name>
        <dbReference type="ChEBI" id="CHEBI:29035"/>
        <label>2</label>
    </ligand>
</feature>
<comment type="cofactor">
    <cofactor evidence="2">
        <name>Mn(2+)</name>
        <dbReference type="ChEBI" id="CHEBI:29035"/>
    </cofactor>
    <text evidence="2">Binds 2 manganese ions per subunit.</text>
</comment>
<comment type="similarity">
    <text evidence="2">Belongs to the peptidase M24B family.</text>
</comment>